<protein>
    <recommendedName>
        <fullName evidence="1">Glutamate--tRNA ligase</fullName>
        <ecNumber evidence="1">6.1.1.17</ecNumber>
    </recommendedName>
    <alternativeName>
        <fullName evidence="1">Glutamyl-tRNA synthetase</fullName>
        <shortName evidence="1">GluRS</shortName>
    </alternativeName>
</protein>
<evidence type="ECO:0000255" key="1">
    <source>
        <dbReference type="HAMAP-Rule" id="MF_00022"/>
    </source>
</evidence>
<evidence type="ECO:0000305" key="2"/>
<name>SYE_AZOBR</name>
<keyword id="KW-0030">Aminoacyl-tRNA synthetase</keyword>
<keyword id="KW-0067">ATP-binding</keyword>
<keyword id="KW-0963">Cytoplasm</keyword>
<keyword id="KW-0436">Ligase</keyword>
<keyword id="KW-0547">Nucleotide-binding</keyword>
<keyword id="KW-0648">Protein biosynthesis</keyword>
<comment type="function">
    <text evidence="1">Catalyzes the attachment of glutamate to tRNA(Glu) in a two-step reaction: glutamate is first activated by ATP to form Glu-AMP and then transferred to the acceptor end of tRNA(Glu).</text>
</comment>
<comment type="catalytic activity">
    <reaction evidence="1">
        <text>tRNA(Glu) + L-glutamate + ATP = L-glutamyl-tRNA(Glu) + AMP + diphosphate</text>
        <dbReference type="Rhea" id="RHEA:23540"/>
        <dbReference type="Rhea" id="RHEA-COMP:9663"/>
        <dbReference type="Rhea" id="RHEA-COMP:9680"/>
        <dbReference type="ChEBI" id="CHEBI:29985"/>
        <dbReference type="ChEBI" id="CHEBI:30616"/>
        <dbReference type="ChEBI" id="CHEBI:33019"/>
        <dbReference type="ChEBI" id="CHEBI:78442"/>
        <dbReference type="ChEBI" id="CHEBI:78520"/>
        <dbReference type="ChEBI" id="CHEBI:456215"/>
        <dbReference type="EC" id="6.1.1.17"/>
    </reaction>
</comment>
<comment type="subunit">
    <text evidence="1">Monomer.</text>
</comment>
<comment type="subcellular location">
    <subcellularLocation>
        <location evidence="1">Cytoplasm</location>
    </subcellularLocation>
</comment>
<comment type="similarity">
    <text evidence="1">Belongs to the class-I aminoacyl-tRNA synthetase family. Glutamate--tRNA ligase type 1 subfamily.</text>
</comment>
<sequence length="446" mass="49179">MSVAVPFAPSPTGLLHVGNVRLALVNWLFARKAGGNFLVRLDDTDEERSKPEYAEGIERDLTWLGLTWDRFARESDRYGATDEVAAALKASGRLYPCYETPEELNLKRASLSSQGRPPIYDRAALRLGDADRARLEAEGRKPHWRFKLEHTPVEWTDLVRGPVHFEGSALSDPVLIAEDGRPLYTLTSVVDDADLAITHVIRGEDHLANTAVQIQIFEAVGGAVPVFAHLPLLTDATGQGLSKRLGSLSVASLREEEGIEPMALASLLAKLGTSDAIEPRLTLDELVAEFDIAKVSRATPKFDPEELLRLNARILHLLPFERVAGELAASVWMMPTPAFWEAVPNLSRVAEARDWWAVTHAPVARRRTIPLFLAEAATLLPKEPWDLSTWGTWTGAVKAKTGRKGKDLFLPLRRALTGRDHGGQLKNLLPLIGRTRAHKRLAGETA</sequence>
<gene>
    <name evidence="1" type="primary">gltX</name>
</gene>
<accession>P45631</accession>
<accession>O07044</accession>
<proteinExistence type="inferred from homology"/>
<organism>
    <name type="scientific">Azospirillum brasilense</name>
    <dbReference type="NCBI Taxonomy" id="192"/>
    <lineage>
        <taxon>Bacteria</taxon>
        <taxon>Pseudomonadati</taxon>
        <taxon>Pseudomonadota</taxon>
        <taxon>Alphaproteobacteria</taxon>
        <taxon>Rhodospirillales</taxon>
        <taxon>Azospirillaceae</taxon>
        <taxon>Azospirillum</taxon>
    </lineage>
</organism>
<reference key="1">
    <citation type="submission" date="1994-11" db="EMBL/GenBank/DDBJ databases">
        <authorList>
            <person name="Costacurta A."/>
            <person name="Keijers V."/>
            <person name="Vanderleyden J."/>
        </authorList>
    </citation>
    <scope>NUCLEOTIDE SEQUENCE [GENOMIC DNA]</scope>
    <source>
        <strain>Sp245</strain>
    </source>
</reference>
<reference key="2">
    <citation type="journal article" date="1998" name="Curr. Microbiol.">
        <title>Identification and isolation of the indole-3-pyruvate decarboxylase gene from Azospirillum brasilense Sp7: sequencing and functional analysis of the gene locus.</title>
        <authorList>
            <person name="Zimmer W."/>
            <person name="Wesche M."/>
            <person name="Timmermans L."/>
        </authorList>
    </citation>
    <scope>NUCLEOTIDE SEQUENCE [GENOMIC DNA]</scope>
    <source>
        <strain>ATCC 29145 / DSM 1690 / IMET 11303 / Sp7</strain>
    </source>
</reference>
<feature type="chain" id="PRO_0000119496" description="Glutamate--tRNA ligase">
    <location>
        <begin position="1"/>
        <end position="446"/>
    </location>
</feature>
<feature type="short sequence motif" description="'HIGH' region" evidence="1">
    <location>
        <begin position="9"/>
        <end position="19"/>
    </location>
</feature>
<feature type="short sequence motif" description="'KMSKS' region" evidence="1">
    <location>
        <begin position="240"/>
        <end position="244"/>
    </location>
</feature>
<feature type="binding site" evidence="1">
    <location>
        <position position="243"/>
    </location>
    <ligand>
        <name>ATP</name>
        <dbReference type="ChEBI" id="CHEBI:30616"/>
    </ligand>
</feature>
<feature type="sequence conflict" description="In Ref. 1; AAA61907." evidence="2" ref="1">
    <original>P</original>
    <variation>R</variation>
    <location>
        <position position="6"/>
    </location>
</feature>
<feature type="sequence conflict" description="In Ref. 1; AAA61907." evidence="2" ref="1">
    <original>V</original>
    <variation>L</variation>
    <location>
        <position position="39"/>
    </location>
</feature>
<feature type="sequence conflict" description="In Ref. 1; AAA61907." evidence="2" ref="1">
    <original>AT</original>
    <variation>RY</variation>
    <location>
        <begin position="80"/>
        <end position="81"/>
    </location>
</feature>
<feature type="sequence conflict" description="In Ref. 1; AAA61907." evidence="2" ref="1">
    <original>S</original>
    <variation>V</variation>
    <location>
        <position position="112"/>
    </location>
</feature>
<feature type="sequence conflict" description="In Ref. 1; AAA61907." evidence="2" ref="1">
    <original>A</original>
    <variation>S</variation>
    <location>
        <position position="137"/>
    </location>
</feature>
<feature type="sequence conflict" description="In Ref. 1; AAA61907." evidence="2" ref="1">
    <original>P</original>
    <variation>R</variation>
    <location>
        <position position="142"/>
    </location>
</feature>
<feature type="sequence conflict" description="In Ref. 1; AAA61907." evidence="2" ref="1">
    <original>S</original>
    <variation>A</variation>
    <location>
        <position position="168"/>
    </location>
</feature>
<feature type="sequence conflict" description="In Ref. 1; AAA61907." evidence="2" ref="1">
    <original>A</original>
    <variation>R</variation>
    <location>
        <position position="177"/>
    </location>
</feature>
<feature type="sequence conflict" description="In Ref. 1; AAA61907." evidence="2" ref="1">
    <original>L</original>
    <variation>V</variation>
    <location>
        <position position="207"/>
    </location>
</feature>
<feature type="sequence conflict" description="In Ref. 1." evidence="2" ref="1">
    <original>VGGA</original>
    <variation>LTNSEGGGV</variation>
    <location>
        <begin position="220"/>
        <end position="223"/>
    </location>
</feature>
<feature type="sequence conflict" description="In Ref. 1; AAA61907." evidence="2" ref="1">
    <original>T</original>
    <variation>A</variation>
    <location>
        <position position="378"/>
    </location>
</feature>
<feature type="sequence conflict" description="In Ref. 1; AAA61907." evidence="2" ref="1">
    <original>K</original>
    <variation>E</variation>
    <location>
        <position position="382"/>
    </location>
</feature>
<feature type="sequence conflict" description="In Ref. 1; AAA61907." evidence="2" ref="1">
    <original>GQ</original>
    <variation>PE</variation>
    <location>
        <begin position="423"/>
        <end position="424"/>
    </location>
</feature>
<feature type="sequence conflict" description="In Ref. 1; AAA61907." evidence="2" ref="1">
    <original>H</original>
    <variation>E</variation>
    <location>
        <position position="438"/>
    </location>
</feature>
<dbReference type="EC" id="6.1.1.17" evidence="1"/>
<dbReference type="EMBL" id="U17699">
    <property type="protein sequence ID" value="AAA61907.1"/>
    <property type="molecule type" value="Genomic_DNA"/>
</dbReference>
<dbReference type="EMBL" id="X99587">
    <property type="protein sequence ID" value="CAA67900.1"/>
    <property type="molecule type" value="Genomic_DNA"/>
</dbReference>
<dbReference type="SMR" id="P45631"/>
<dbReference type="GO" id="GO:0005737">
    <property type="term" value="C:cytoplasm"/>
    <property type="evidence" value="ECO:0007669"/>
    <property type="project" value="UniProtKB-SubCell"/>
</dbReference>
<dbReference type="GO" id="GO:0005524">
    <property type="term" value="F:ATP binding"/>
    <property type="evidence" value="ECO:0007669"/>
    <property type="project" value="UniProtKB-UniRule"/>
</dbReference>
<dbReference type="GO" id="GO:0004818">
    <property type="term" value="F:glutamate-tRNA ligase activity"/>
    <property type="evidence" value="ECO:0007669"/>
    <property type="project" value="UniProtKB-UniRule"/>
</dbReference>
<dbReference type="GO" id="GO:0000049">
    <property type="term" value="F:tRNA binding"/>
    <property type="evidence" value="ECO:0007669"/>
    <property type="project" value="InterPro"/>
</dbReference>
<dbReference type="GO" id="GO:0008270">
    <property type="term" value="F:zinc ion binding"/>
    <property type="evidence" value="ECO:0007669"/>
    <property type="project" value="InterPro"/>
</dbReference>
<dbReference type="GO" id="GO:0006424">
    <property type="term" value="P:glutamyl-tRNA aminoacylation"/>
    <property type="evidence" value="ECO:0007669"/>
    <property type="project" value="UniProtKB-UniRule"/>
</dbReference>
<dbReference type="CDD" id="cd00808">
    <property type="entry name" value="GluRS_core"/>
    <property type="match status" value="1"/>
</dbReference>
<dbReference type="Gene3D" id="1.10.10.350">
    <property type="match status" value="1"/>
</dbReference>
<dbReference type="Gene3D" id="3.40.50.620">
    <property type="entry name" value="HUPs"/>
    <property type="match status" value="1"/>
</dbReference>
<dbReference type="HAMAP" id="MF_00022">
    <property type="entry name" value="Glu_tRNA_synth_type1"/>
    <property type="match status" value="1"/>
</dbReference>
<dbReference type="InterPro" id="IPR045462">
    <property type="entry name" value="aa-tRNA-synth_I_cd-bd"/>
</dbReference>
<dbReference type="InterPro" id="IPR020751">
    <property type="entry name" value="aa-tRNA-synth_I_codon-bd_sub2"/>
</dbReference>
<dbReference type="InterPro" id="IPR001412">
    <property type="entry name" value="aa-tRNA-synth_I_CS"/>
</dbReference>
<dbReference type="InterPro" id="IPR008925">
    <property type="entry name" value="aa_tRNA-synth_I_cd-bd_sf"/>
</dbReference>
<dbReference type="InterPro" id="IPR004527">
    <property type="entry name" value="Glu-tRNA-ligase_bac/mito"/>
</dbReference>
<dbReference type="InterPro" id="IPR000924">
    <property type="entry name" value="Glu/Gln-tRNA-synth"/>
</dbReference>
<dbReference type="InterPro" id="IPR020058">
    <property type="entry name" value="Glu/Gln-tRNA-synth_Ib_cat-dom"/>
</dbReference>
<dbReference type="InterPro" id="IPR049940">
    <property type="entry name" value="GluQ/Sye"/>
</dbReference>
<dbReference type="InterPro" id="IPR033910">
    <property type="entry name" value="GluRS_core"/>
</dbReference>
<dbReference type="InterPro" id="IPR014729">
    <property type="entry name" value="Rossmann-like_a/b/a_fold"/>
</dbReference>
<dbReference type="NCBIfam" id="TIGR00464">
    <property type="entry name" value="gltX_bact"/>
    <property type="match status" value="1"/>
</dbReference>
<dbReference type="PANTHER" id="PTHR43311">
    <property type="entry name" value="GLUTAMATE--TRNA LIGASE"/>
    <property type="match status" value="1"/>
</dbReference>
<dbReference type="PANTHER" id="PTHR43311:SF2">
    <property type="entry name" value="GLUTAMATE--TRNA LIGASE, MITOCHONDRIAL-RELATED"/>
    <property type="match status" value="1"/>
</dbReference>
<dbReference type="Pfam" id="PF19269">
    <property type="entry name" value="Anticodon_2"/>
    <property type="match status" value="1"/>
</dbReference>
<dbReference type="Pfam" id="PF00749">
    <property type="entry name" value="tRNA-synt_1c"/>
    <property type="match status" value="1"/>
</dbReference>
<dbReference type="PRINTS" id="PR00987">
    <property type="entry name" value="TRNASYNTHGLU"/>
</dbReference>
<dbReference type="SUPFAM" id="SSF48163">
    <property type="entry name" value="An anticodon-binding domain of class I aminoacyl-tRNA synthetases"/>
    <property type="match status" value="1"/>
</dbReference>
<dbReference type="SUPFAM" id="SSF52374">
    <property type="entry name" value="Nucleotidylyl transferase"/>
    <property type="match status" value="1"/>
</dbReference>
<dbReference type="PROSITE" id="PS00178">
    <property type="entry name" value="AA_TRNA_LIGASE_I"/>
    <property type="match status" value="1"/>
</dbReference>